<comment type="function">
    <text evidence="1">Core subunit of the mitochondrial membrane respiratory chain NADH dehydrogenase (Complex I) that is believed to belong to the minimal assembly required for catalysis. Complex I functions in the transfer of electrons from NADH to the respiratory chain. The immediate electron acceptor for the enzyme is believed to be ubiquinone (By similarity).</text>
</comment>
<comment type="catalytic activity">
    <reaction>
        <text>a ubiquinone + NADH + 5 H(+)(in) = a ubiquinol + NAD(+) + 4 H(+)(out)</text>
        <dbReference type="Rhea" id="RHEA:29091"/>
        <dbReference type="Rhea" id="RHEA-COMP:9565"/>
        <dbReference type="Rhea" id="RHEA-COMP:9566"/>
        <dbReference type="ChEBI" id="CHEBI:15378"/>
        <dbReference type="ChEBI" id="CHEBI:16389"/>
        <dbReference type="ChEBI" id="CHEBI:17976"/>
        <dbReference type="ChEBI" id="CHEBI:57540"/>
        <dbReference type="ChEBI" id="CHEBI:57945"/>
        <dbReference type="EC" id="7.1.1.2"/>
    </reaction>
</comment>
<comment type="subcellular location">
    <subcellularLocation>
        <location evidence="1">Mitochondrion inner membrane</location>
        <topology evidence="1">Multi-pass membrane protein</topology>
    </subcellularLocation>
</comment>
<comment type="similarity">
    <text evidence="3">Belongs to the complex I subunit 1 family.</text>
</comment>
<gene>
    <name type="primary">mt:ND1</name>
    <name type="synonym">ND1</name>
</gene>
<evidence type="ECO:0000250" key="1"/>
<evidence type="ECO:0000255" key="2"/>
<evidence type="ECO:0000305" key="3"/>
<sequence length="163" mass="18204">MEFILSLIGSLLLVICVLVSVAFLTLLERKVLGYIQIRKGPNKVGLMGIPQPFCDAIKLFTKEQTYPLLSNYLSYYISPIFSLFLSLFVWMCMPFFVKLYSFNLGGLFFLCCTSLGVYTVMVAGWSSNSNYALLGGLRAVAQTISYEVSLALIGFKILLFSLL</sequence>
<proteinExistence type="inferred from homology"/>
<organism>
    <name type="scientific">Drosophila subsilvestris</name>
    <name type="common">Fruit fly</name>
    <dbReference type="NCBI Taxonomy" id="7239"/>
    <lineage>
        <taxon>Eukaryota</taxon>
        <taxon>Metazoa</taxon>
        <taxon>Ecdysozoa</taxon>
        <taxon>Arthropoda</taxon>
        <taxon>Hexapoda</taxon>
        <taxon>Insecta</taxon>
        <taxon>Pterygota</taxon>
        <taxon>Neoptera</taxon>
        <taxon>Endopterygota</taxon>
        <taxon>Diptera</taxon>
        <taxon>Brachycera</taxon>
        <taxon>Muscomorpha</taxon>
        <taxon>Ephydroidea</taxon>
        <taxon>Drosophilidae</taxon>
        <taxon>Drosophila</taxon>
        <taxon>Sophophora</taxon>
    </lineage>
</organism>
<accession>P51938</accession>
<accession>Q34385</accession>
<reference key="1">
    <citation type="journal article" date="1994" name="J. Mol. Evol.">
        <title>Phylogeny of the Drosophila obscura species group deduced from mitochondrial DNA sequences.</title>
        <authorList>
            <person name="Barrio E."/>
            <person name="Latorre A."/>
            <person name="Moya A."/>
        </authorList>
    </citation>
    <scope>NUCLEOTIDE SEQUENCE [GENOMIC DNA]</scope>
</reference>
<feature type="chain" id="PRO_0000117398" description="NADH-ubiquinone oxidoreductase chain 1">
    <location>
        <begin position="1"/>
        <end position="163"/>
    </location>
</feature>
<feature type="transmembrane region" description="Helical" evidence="2">
    <location>
        <begin position="3"/>
        <end position="23"/>
    </location>
</feature>
<feature type="transmembrane region" description="Helical" evidence="2">
    <location>
        <begin position="77"/>
        <end position="97"/>
    </location>
</feature>
<feature type="transmembrane region" description="Helical" evidence="2">
    <location>
        <begin position="104"/>
        <end position="124"/>
    </location>
</feature>
<feature type="transmembrane region" description="Helical" evidence="2">
    <location>
        <begin position="143"/>
        <end position="163"/>
    </location>
</feature>
<feature type="non-consecutive residues" evidence="3">
    <location>
        <begin position="152"/>
        <end position="153"/>
    </location>
</feature>
<protein>
    <recommendedName>
        <fullName>NADH-ubiquinone oxidoreductase chain 1</fullName>
        <ecNumber>7.1.1.2</ecNumber>
    </recommendedName>
    <alternativeName>
        <fullName>NADH dehydrogenase subunit 1</fullName>
    </alternativeName>
</protein>
<dbReference type="EC" id="7.1.1.2"/>
<dbReference type="EMBL" id="U07309">
    <property type="protein sequence ID" value="AAA76641.1"/>
    <property type="molecule type" value="Genomic_DNA"/>
</dbReference>
<dbReference type="EMBL" id="U07310">
    <property type="protein sequence ID" value="AAA76642.1"/>
    <property type="molecule type" value="Genomic_DNA"/>
</dbReference>
<dbReference type="SMR" id="P51938"/>
<dbReference type="GO" id="GO:0005743">
    <property type="term" value="C:mitochondrial inner membrane"/>
    <property type="evidence" value="ECO:0007669"/>
    <property type="project" value="UniProtKB-SubCell"/>
</dbReference>
<dbReference type="GO" id="GO:0008137">
    <property type="term" value="F:NADH dehydrogenase (ubiquinone) activity"/>
    <property type="evidence" value="ECO:0007669"/>
    <property type="project" value="UniProtKB-EC"/>
</dbReference>
<dbReference type="GO" id="GO:0009060">
    <property type="term" value="P:aerobic respiration"/>
    <property type="evidence" value="ECO:0007669"/>
    <property type="project" value="TreeGrafter"/>
</dbReference>
<dbReference type="InterPro" id="IPR001694">
    <property type="entry name" value="NADH_UbQ_OxRdtase_su1/FPO"/>
</dbReference>
<dbReference type="InterPro" id="IPR018086">
    <property type="entry name" value="NADH_UbQ_OxRdtase_su1_CS"/>
</dbReference>
<dbReference type="PANTHER" id="PTHR11432">
    <property type="entry name" value="NADH DEHYDROGENASE SUBUNIT 1"/>
    <property type="match status" value="1"/>
</dbReference>
<dbReference type="PANTHER" id="PTHR11432:SF3">
    <property type="entry name" value="NADH-UBIQUINONE OXIDOREDUCTASE CHAIN 1"/>
    <property type="match status" value="1"/>
</dbReference>
<dbReference type="Pfam" id="PF00146">
    <property type="entry name" value="NADHdh"/>
    <property type="match status" value="1"/>
</dbReference>
<dbReference type="PROSITE" id="PS00667">
    <property type="entry name" value="COMPLEX1_ND1_1"/>
    <property type="match status" value="1"/>
</dbReference>
<name>NU1M_DROSS</name>
<keyword id="KW-0249">Electron transport</keyword>
<keyword id="KW-0472">Membrane</keyword>
<keyword id="KW-0496">Mitochondrion</keyword>
<keyword id="KW-0999">Mitochondrion inner membrane</keyword>
<keyword id="KW-0520">NAD</keyword>
<keyword id="KW-0679">Respiratory chain</keyword>
<keyword id="KW-1278">Translocase</keyword>
<keyword id="KW-0812">Transmembrane</keyword>
<keyword id="KW-1133">Transmembrane helix</keyword>
<keyword id="KW-0813">Transport</keyword>
<keyword id="KW-0830">Ubiquinone</keyword>
<geneLocation type="mitochondrion"/>